<gene>
    <name evidence="1" type="primary">carA</name>
    <name type="ordered locus">MJ1019</name>
</gene>
<feature type="chain" id="PRO_0000112358" description="Carbamoyl phosphate synthase small chain">
    <location>
        <begin position="1"/>
        <end position="354"/>
    </location>
</feature>
<feature type="domain" description="Glutamine amidotransferase type-1" evidence="1">
    <location>
        <begin position="171"/>
        <end position="354"/>
    </location>
</feature>
<feature type="region of interest" description="CPSase" evidence="1">
    <location>
        <begin position="1"/>
        <end position="167"/>
    </location>
</feature>
<feature type="active site" description="Nucleophile" evidence="1">
    <location>
        <position position="246"/>
    </location>
</feature>
<feature type="active site" evidence="1">
    <location>
        <position position="330"/>
    </location>
</feature>
<feature type="active site" evidence="1">
    <location>
        <position position="332"/>
    </location>
</feature>
<feature type="binding site" evidence="1">
    <location>
        <position position="45"/>
    </location>
    <ligand>
        <name>L-glutamine</name>
        <dbReference type="ChEBI" id="CHEBI:58359"/>
    </ligand>
</feature>
<feature type="binding site" evidence="1">
    <location>
        <position position="219"/>
    </location>
    <ligand>
        <name>L-glutamine</name>
        <dbReference type="ChEBI" id="CHEBI:58359"/>
    </ligand>
</feature>
<feature type="binding site" evidence="1">
    <location>
        <position position="221"/>
    </location>
    <ligand>
        <name>L-glutamine</name>
        <dbReference type="ChEBI" id="CHEBI:58359"/>
    </ligand>
</feature>
<feature type="binding site" evidence="1">
    <location>
        <position position="247"/>
    </location>
    <ligand>
        <name>L-glutamine</name>
        <dbReference type="ChEBI" id="CHEBI:58359"/>
    </ligand>
</feature>
<feature type="binding site" evidence="1">
    <location>
        <position position="250"/>
    </location>
    <ligand>
        <name>L-glutamine</name>
        <dbReference type="ChEBI" id="CHEBI:58359"/>
    </ligand>
</feature>
<feature type="binding site" evidence="1">
    <location>
        <position position="288"/>
    </location>
    <ligand>
        <name>L-glutamine</name>
        <dbReference type="ChEBI" id="CHEBI:58359"/>
    </ligand>
</feature>
<feature type="binding site" evidence="1">
    <location>
        <position position="290"/>
    </location>
    <ligand>
        <name>L-glutamine</name>
        <dbReference type="ChEBI" id="CHEBI:58359"/>
    </ligand>
</feature>
<feature type="binding site" evidence="1">
    <location>
        <position position="291"/>
    </location>
    <ligand>
        <name>L-glutamine</name>
        <dbReference type="ChEBI" id="CHEBI:58359"/>
    </ligand>
</feature>
<sequence length="354" mass="39920">MEAVLILEDGTILKGKGFGAEKEVFGELVFTTVMTGYVEVLTDPSYKGQIVMMTYPLEGNYGVKKDWFESDGIKAEGFVVREVTSKALDDFLKEYDIPGIQDIDTRFLTRKIRDKGVVKSCLKVAEEISDDEISELLERVKRYSDISDIDLVPLVSTKEPKIHKTANPKARCVLIDCGVKLNIIRSLVQRNCEVIQVPYNTKYDEILEYKPDFVLISNGPGDPARLKEVIKNIKNLIGVVPITGICLGNQLLSLAFGGETYKMKFGHRGGNQPVKDLKTQKVYITSQNHGFAVRKESLPDDVEVSFINLNDMTVEGIRHKDLPIFSVQFHPEARPGPHDTMFLFDEMIKLKDRK</sequence>
<reference key="1">
    <citation type="journal article" date="1996" name="Science">
        <title>Complete genome sequence of the methanogenic archaeon, Methanococcus jannaschii.</title>
        <authorList>
            <person name="Bult C.J."/>
            <person name="White O."/>
            <person name="Olsen G.J."/>
            <person name="Zhou L."/>
            <person name="Fleischmann R.D."/>
            <person name="Sutton G.G."/>
            <person name="Blake J.A."/>
            <person name="FitzGerald L.M."/>
            <person name="Clayton R.A."/>
            <person name="Gocayne J.D."/>
            <person name="Kerlavage A.R."/>
            <person name="Dougherty B.A."/>
            <person name="Tomb J.-F."/>
            <person name="Adams M.D."/>
            <person name="Reich C.I."/>
            <person name="Overbeek R."/>
            <person name="Kirkness E.F."/>
            <person name="Weinstock K.G."/>
            <person name="Merrick J.M."/>
            <person name="Glodek A."/>
            <person name="Scott J.L."/>
            <person name="Geoghagen N.S.M."/>
            <person name="Weidman J.F."/>
            <person name="Fuhrmann J.L."/>
            <person name="Nguyen D."/>
            <person name="Utterback T.R."/>
            <person name="Kelley J.M."/>
            <person name="Peterson J.D."/>
            <person name="Sadow P.W."/>
            <person name="Hanna M.C."/>
            <person name="Cotton M.D."/>
            <person name="Roberts K.M."/>
            <person name="Hurst M.A."/>
            <person name="Kaine B.P."/>
            <person name="Borodovsky M."/>
            <person name="Klenk H.-P."/>
            <person name="Fraser C.M."/>
            <person name="Smith H.O."/>
            <person name="Woese C.R."/>
            <person name="Venter J.C."/>
        </authorList>
    </citation>
    <scope>NUCLEOTIDE SEQUENCE [LARGE SCALE GENOMIC DNA]</scope>
    <source>
        <strain>ATCC 43067 / DSM 2661 / JAL-1 / JCM 10045 / NBRC 100440</strain>
    </source>
</reference>
<dbReference type="EC" id="6.3.5.5" evidence="1"/>
<dbReference type="EMBL" id="L77117">
    <property type="protein sequence ID" value="AAB99021.1"/>
    <property type="molecule type" value="Genomic_DNA"/>
</dbReference>
<dbReference type="RefSeq" id="WP_010870532.1">
    <property type="nucleotide sequence ID" value="NC_000909.1"/>
</dbReference>
<dbReference type="SMR" id="Q58425"/>
<dbReference type="FunCoup" id="Q58425">
    <property type="interactions" value="282"/>
</dbReference>
<dbReference type="STRING" id="243232.MJ_1019"/>
<dbReference type="MEROPS" id="C26.A33"/>
<dbReference type="PaxDb" id="243232-MJ_1019"/>
<dbReference type="EnsemblBacteria" id="AAB99021">
    <property type="protein sequence ID" value="AAB99021"/>
    <property type="gene ID" value="MJ_1019"/>
</dbReference>
<dbReference type="GeneID" id="1451916"/>
<dbReference type="KEGG" id="mja:MJ_1019"/>
<dbReference type="eggNOG" id="arCOG00064">
    <property type="taxonomic scope" value="Archaea"/>
</dbReference>
<dbReference type="HOGENOM" id="CLU_035901_2_1_2"/>
<dbReference type="InParanoid" id="Q58425"/>
<dbReference type="OrthoDB" id="7675at2157"/>
<dbReference type="PhylomeDB" id="Q58425"/>
<dbReference type="UniPathway" id="UPA00068">
    <property type="reaction ID" value="UER00171"/>
</dbReference>
<dbReference type="UniPathway" id="UPA00070">
    <property type="reaction ID" value="UER00115"/>
</dbReference>
<dbReference type="Proteomes" id="UP000000805">
    <property type="component" value="Chromosome"/>
</dbReference>
<dbReference type="GO" id="GO:0005951">
    <property type="term" value="C:carbamoyl-phosphate synthase complex"/>
    <property type="evidence" value="ECO:0000318"/>
    <property type="project" value="GO_Central"/>
</dbReference>
<dbReference type="GO" id="GO:0005737">
    <property type="term" value="C:cytoplasm"/>
    <property type="evidence" value="ECO:0000318"/>
    <property type="project" value="GO_Central"/>
</dbReference>
<dbReference type="GO" id="GO:0005524">
    <property type="term" value="F:ATP binding"/>
    <property type="evidence" value="ECO:0007669"/>
    <property type="project" value="UniProtKB-UniRule"/>
</dbReference>
<dbReference type="GO" id="GO:0004088">
    <property type="term" value="F:carbamoyl-phosphate synthase (glutamine-hydrolyzing) activity"/>
    <property type="evidence" value="ECO:0007669"/>
    <property type="project" value="UniProtKB-UniRule"/>
</dbReference>
<dbReference type="GO" id="GO:0004359">
    <property type="term" value="F:glutaminase activity"/>
    <property type="evidence" value="ECO:0007669"/>
    <property type="project" value="RHEA"/>
</dbReference>
<dbReference type="GO" id="GO:0006207">
    <property type="term" value="P:'de novo' pyrimidine nucleobase biosynthetic process"/>
    <property type="evidence" value="ECO:0007669"/>
    <property type="project" value="InterPro"/>
</dbReference>
<dbReference type="GO" id="GO:0044205">
    <property type="term" value="P:'de novo' UMP biosynthetic process"/>
    <property type="evidence" value="ECO:0007669"/>
    <property type="project" value="UniProtKB-UniRule"/>
</dbReference>
<dbReference type="GO" id="GO:0006541">
    <property type="term" value="P:glutamine metabolic process"/>
    <property type="evidence" value="ECO:0007669"/>
    <property type="project" value="InterPro"/>
</dbReference>
<dbReference type="GO" id="GO:0006526">
    <property type="term" value="P:L-arginine biosynthetic process"/>
    <property type="evidence" value="ECO:0000318"/>
    <property type="project" value="GO_Central"/>
</dbReference>
<dbReference type="CDD" id="cd01744">
    <property type="entry name" value="GATase1_CPSase"/>
    <property type="match status" value="1"/>
</dbReference>
<dbReference type="Gene3D" id="3.40.50.880">
    <property type="match status" value="1"/>
</dbReference>
<dbReference type="Gene3D" id="3.50.30.20">
    <property type="entry name" value="Carbamoyl-phosphate synthase small subunit, N-terminal domain"/>
    <property type="match status" value="1"/>
</dbReference>
<dbReference type="HAMAP" id="MF_01209">
    <property type="entry name" value="CPSase_S_chain"/>
    <property type="match status" value="1"/>
</dbReference>
<dbReference type="InterPro" id="IPR050472">
    <property type="entry name" value="Anth_synth/Amidotransfase"/>
</dbReference>
<dbReference type="InterPro" id="IPR006274">
    <property type="entry name" value="CarbamoylP_synth_ssu"/>
</dbReference>
<dbReference type="InterPro" id="IPR002474">
    <property type="entry name" value="CarbamoylP_synth_ssu_N"/>
</dbReference>
<dbReference type="InterPro" id="IPR036480">
    <property type="entry name" value="CarbP_synth_ssu_N_sf"/>
</dbReference>
<dbReference type="InterPro" id="IPR029062">
    <property type="entry name" value="Class_I_gatase-like"/>
</dbReference>
<dbReference type="InterPro" id="IPR035686">
    <property type="entry name" value="CPSase_GATase1"/>
</dbReference>
<dbReference type="InterPro" id="IPR017926">
    <property type="entry name" value="GATASE"/>
</dbReference>
<dbReference type="NCBIfam" id="TIGR01368">
    <property type="entry name" value="CPSaseIIsmall"/>
    <property type="match status" value="1"/>
</dbReference>
<dbReference type="NCBIfam" id="NF009475">
    <property type="entry name" value="PRK12838.1"/>
    <property type="match status" value="1"/>
</dbReference>
<dbReference type="PANTHER" id="PTHR43418:SF7">
    <property type="entry name" value="CARBAMOYL-PHOSPHATE SYNTHASE SMALL CHAIN"/>
    <property type="match status" value="1"/>
</dbReference>
<dbReference type="PANTHER" id="PTHR43418">
    <property type="entry name" value="MULTIFUNCTIONAL TRYPTOPHAN BIOSYNTHESIS PROTEIN-RELATED"/>
    <property type="match status" value="1"/>
</dbReference>
<dbReference type="Pfam" id="PF00988">
    <property type="entry name" value="CPSase_sm_chain"/>
    <property type="match status" value="1"/>
</dbReference>
<dbReference type="Pfam" id="PF00117">
    <property type="entry name" value="GATase"/>
    <property type="match status" value="1"/>
</dbReference>
<dbReference type="PRINTS" id="PR00097">
    <property type="entry name" value="ANTSNTHASEII"/>
</dbReference>
<dbReference type="PRINTS" id="PR00099">
    <property type="entry name" value="CPSGATASE"/>
</dbReference>
<dbReference type="PRINTS" id="PR00096">
    <property type="entry name" value="GATASE"/>
</dbReference>
<dbReference type="SMART" id="SM01097">
    <property type="entry name" value="CPSase_sm_chain"/>
    <property type="match status" value="1"/>
</dbReference>
<dbReference type="SUPFAM" id="SSF52021">
    <property type="entry name" value="Carbamoyl phosphate synthetase, small subunit N-terminal domain"/>
    <property type="match status" value="1"/>
</dbReference>
<dbReference type="SUPFAM" id="SSF52317">
    <property type="entry name" value="Class I glutamine amidotransferase-like"/>
    <property type="match status" value="1"/>
</dbReference>
<dbReference type="PROSITE" id="PS51273">
    <property type="entry name" value="GATASE_TYPE_1"/>
    <property type="match status" value="1"/>
</dbReference>
<evidence type="ECO:0000255" key="1">
    <source>
        <dbReference type="HAMAP-Rule" id="MF_01209"/>
    </source>
</evidence>
<name>CARA_METJA</name>
<proteinExistence type="inferred from homology"/>
<accession>Q58425</accession>
<protein>
    <recommendedName>
        <fullName evidence="1">Carbamoyl phosphate synthase small chain</fullName>
        <ecNumber evidence="1">6.3.5.5</ecNumber>
    </recommendedName>
    <alternativeName>
        <fullName evidence="1">Carbamoyl phosphate synthetase glutamine chain</fullName>
    </alternativeName>
</protein>
<keyword id="KW-0028">Amino-acid biosynthesis</keyword>
<keyword id="KW-0055">Arginine biosynthesis</keyword>
<keyword id="KW-0067">ATP-binding</keyword>
<keyword id="KW-0315">Glutamine amidotransferase</keyword>
<keyword id="KW-0436">Ligase</keyword>
<keyword id="KW-0547">Nucleotide-binding</keyword>
<keyword id="KW-0665">Pyrimidine biosynthesis</keyword>
<keyword id="KW-1185">Reference proteome</keyword>
<comment type="function">
    <text evidence="1">Small subunit of the glutamine-dependent carbamoyl phosphate synthetase (CPSase). CPSase catalyzes the formation of carbamoyl phosphate from the ammonia moiety of glutamine, carbonate, and phosphate donated by ATP, constituting the first step of 2 biosynthetic pathways, one leading to arginine and/or urea and the other to pyrimidine nucleotides. The small subunit (glutamine amidotransferase) binds and cleaves glutamine to supply the large subunit with the substrate ammonia.</text>
</comment>
<comment type="catalytic activity">
    <reaction evidence="1">
        <text>hydrogencarbonate + L-glutamine + 2 ATP + H2O = carbamoyl phosphate + L-glutamate + 2 ADP + phosphate + 2 H(+)</text>
        <dbReference type="Rhea" id="RHEA:18633"/>
        <dbReference type="ChEBI" id="CHEBI:15377"/>
        <dbReference type="ChEBI" id="CHEBI:15378"/>
        <dbReference type="ChEBI" id="CHEBI:17544"/>
        <dbReference type="ChEBI" id="CHEBI:29985"/>
        <dbReference type="ChEBI" id="CHEBI:30616"/>
        <dbReference type="ChEBI" id="CHEBI:43474"/>
        <dbReference type="ChEBI" id="CHEBI:58228"/>
        <dbReference type="ChEBI" id="CHEBI:58359"/>
        <dbReference type="ChEBI" id="CHEBI:456216"/>
        <dbReference type="EC" id="6.3.5.5"/>
    </reaction>
</comment>
<comment type="catalytic activity">
    <molecule>Carbamoyl phosphate synthase small chain</molecule>
    <reaction evidence="1">
        <text>L-glutamine + H2O = L-glutamate + NH4(+)</text>
        <dbReference type="Rhea" id="RHEA:15889"/>
        <dbReference type="ChEBI" id="CHEBI:15377"/>
        <dbReference type="ChEBI" id="CHEBI:28938"/>
        <dbReference type="ChEBI" id="CHEBI:29985"/>
        <dbReference type="ChEBI" id="CHEBI:58359"/>
    </reaction>
</comment>
<comment type="pathway">
    <text evidence="1">Amino-acid biosynthesis; L-arginine biosynthesis; carbamoyl phosphate from bicarbonate: step 1/1.</text>
</comment>
<comment type="pathway">
    <text evidence="1">Pyrimidine metabolism; UMP biosynthesis via de novo pathway; (S)-dihydroorotate from bicarbonate: step 1/3.</text>
</comment>
<comment type="subunit">
    <text evidence="1">Composed of two chains; the small (or glutamine) chain promotes the hydrolysis of glutamine to ammonia, which is used by the large (or ammonia) chain to synthesize carbamoyl phosphate. Tetramer of heterodimers (alpha,beta)4.</text>
</comment>
<comment type="similarity">
    <text evidence="1">Belongs to the CarA family.</text>
</comment>
<organism>
    <name type="scientific">Methanocaldococcus jannaschii (strain ATCC 43067 / DSM 2661 / JAL-1 / JCM 10045 / NBRC 100440)</name>
    <name type="common">Methanococcus jannaschii</name>
    <dbReference type="NCBI Taxonomy" id="243232"/>
    <lineage>
        <taxon>Archaea</taxon>
        <taxon>Methanobacteriati</taxon>
        <taxon>Methanobacteriota</taxon>
        <taxon>Methanomada group</taxon>
        <taxon>Methanococci</taxon>
        <taxon>Methanococcales</taxon>
        <taxon>Methanocaldococcaceae</taxon>
        <taxon>Methanocaldococcus</taxon>
    </lineage>
</organism>